<comment type="function">
    <text evidence="1">Catalyzes the N-deacetylation of poly-beta-1,6-N-acetyl-D-glucosamine (PGA), a biofilm adhesin polysaccharide. N-deacetylation promotes PGA export through the PgaA porin (By similarity).</text>
</comment>
<comment type="subcellular location">
    <subcellularLocation>
        <location evidence="1">Cell outer membrane</location>
        <topology evidence="2">Lipid-anchor</topology>
        <orientation evidence="1">Periplasmic side</orientation>
    </subcellularLocation>
</comment>
<comment type="domain">
    <text evidence="1">Contains a N-terminal polysaccharide deacetylase domain, and a C-terminal domain required for PGA N-deacetylation that may be involved in binding to unmodified poly-beta-1,6-GlcNAc and thereby assists catalysis by the deacetylase domain.</text>
</comment>
<comment type="similarity">
    <text evidence="4">Belongs to the polysaccharide deacetylase family.</text>
</comment>
<gene>
    <name type="primary">pgaB</name>
    <name type="ordered locus">Z1525</name>
    <name type="ordered locus">ECs1269</name>
</gene>
<keyword id="KW-0998">Cell outer membrane</keyword>
<keyword id="KW-0378">Hydrolase</keyword>
<keyword id="KW-0449">Lipoprotein</keyword>
<keyword id="KW-0472">Membrane</keyword>
<keyword id="KW-0564">Palmitate</keyword>
<keyword id="KW-1185">Reference proteome</keyword>
<keyword id="KW-0732">Signal</keyword>
<sequence length="672" mass="77426">MLRNGNKYLLMLVSIIMLTACISQSRTSFIPPQDRKSLLAEQPWPHNGFVAISWHNVEDEAADQRFMSVRTSALREQFAWLRENGYQPVSIAQIREAHRGGKPLPEKAVVLTFDDGYQSFYTRVFPILQAFQWPAVWAPVGSWVDTPADKQVKFGDELVDREYFATWQQVREVARSRLVELASHTWNSHYGIQANATGSLLPVYVNRAYFTDHARYETAAEYRERIRLDAVKMTEYLRTKVEVNPHVFIWPYGEANGIAIEELKKLGYDMFFTLESGLANASQLDSIPRVLIANNPSLKEFAQQIITVQEKSPQRIMHIDLDYVYDENLQQMDRNIDVLIQRVKDMQISTVYLQAFADPDGDGLVKEVWFPNRLLPMKADIFSRVAWQLRTRSGVNIYAWMPVLSWDLDPTLTRVKYLPTGEKKAQIHPEQYHRLSPFDDRVRAQVGMLYEDLAGHAAFDGILFHDDALLSDYEDASAPAITAYQQAGFSGSLSEIRQNPEQFKQWARFKSRALTDFTLELSARVKAIRGPHIKTARNIFALPVIQPESEAWFAQNYADFLKSYDWTAIMAMPYLEGVAEKSADQWLIQLTNQIKNIPQAKDKSILELQAQNWQKNGQHQAISSQQLAHWMSLLQLNGVKNYGYYPDNFLHNQPEIDLIRPEFSTAWYPKND</sequence>
<organism>
    <name type="scientific">Escherichia coli O157:H7</name>
    <dbReference type="NCBI Taxonomy" id="83334"/>
    <lineage>
        <taxon>Bacteria</taxon>
        <taxon>Pseudomonadati</taxon>
        <taxon>Pseudomonadota</taxon>
        <taxon>Gammaproteobacteria</taxon>
        <taxon>Enterobacterales</taxon>
        <taxon>Enterobacteriaceae</taxon>
        <taxon>Escherichia</taxon>
    </lineage>
</organism>
<proteinExistence type="inferred from homology"/>
<accession>Q8XAR3</accession>
<accession>Q7AFM2</accession>
<reference key="1">
    <citation type="journal article" date="2001" name="Nature">
        <title>Genome sequence of enterohaemorrhagic Escherichia coli O157:H7.</title>
        <authorList>
            <person name="Perna N.T."/>
            <person name="Plunkett G. III"/>
            <person name="Burland V."/>
            <person name="Mau B."/>
            <person name="Glasner J.D."/>
            <person name="Rose D.J."/>
            <person name="Mayhew G.F."/>
            <person name="Evans P.S."/>
            <person name="Gregor J."/>
            <person name="Kirkpatrick H.A."/>
            <person name="Posfai G."/>
            <person name="Hackett J."/>
            <person name="Klink S."/>
            <person name="Boutin A."/>
            <person name="Shao Y."/>
            <person name="Miller L."/>
            <person name="Grotbeck E.J."/>
            <person name="Davis N.W."/>
            <person name="Lim A."/>
            <person name="Dimalanta E.T."/>
            <person name="Potamousis K."/>
            <person name="Apodaca J."/>
            <person name="Anantharaman T.S."/>
            <person name="Lin J."/>
            <person name="Yen G."/>
            <person name="Schwartz D.C."/>
            <person name="Welch R.A."/>
            <person name="Blattner F.R."/>
        </authorList>
    </citation>
    <scope>NUCLEOTIDE SEQUENCE [LARGE SCALE GENOMIC DNA]</scope>
    <source>
        <strain>O157:H7 / EDL933 / ATCC 700927 / EHEC</strain>
    </source>
</reference>
<reference key="2">
    <citation type="journal article" date="2001" name="DNA Res.">
        <title>Complete genome sequence of enterohemorrhagic Escherichia coli O157:H7 and genomic comparison with a laboratory strain K-12.</title>
        <authorList>
            <person name="Hayashi T."/>
            <person name="Makino K."/>
            <person name="Ohnishi M."/>
            <person name="Kurokawa K."/>
            <person name="Ishii K."/>
            <person name="Yokoyama K."/>
            <person name="Han C.-G."/>
            <person name="Ohtsubo E."/>
            <person name="Nakayama K."/>
            <person name="Murata T."/>
            <person name="Tanaka M."/>
            <person name="Tobe T."/>
            <person name="Iida T."/>
            <person name="Takami H."/>
            <person name="Honda T."/>
            <person name="Sasakawa C."/>
            <person name="Ogasawara N."/>
            <person name="Yasunaga T."/>
            <person name="Kuhara S."/>
            <person name="Shiba T."/>
            <person name="Hattori M."/>
            <person name="Shinagawa H."/>
        </authorList>
    </citation>
    <scope>NUCLEOTIDE SEQUENCE [LARGE SCALE GENOMIC DNA]</scope>
    <source>
        <strain>O157:H7 / Sakai / RIMD 0509952 / EHEC</strain>
    </source>
</reference>
<feature type="signal peptide" evidence="2">
    <location>
        <begin position="1"/>
        <end position="20"/>
    </location>
</feature>
<feature type="chain" id="PRO_0000024845" description="Poly-beta-1,6-N-acetyl-D-glucosamine N-deacetylase">
    <location>
        <begin position="21"/>
        <end position="672"/>
    </location>
</feature>
<feature type="domain" description="NodB homology" evidence="3">
    <location>
        <begin position="107"/>
        <end position="349"/>
    </location>
</feature>
<feature type="lipid moiety-binding region" description="N-palmitoyl cysteine" evidence="2">
    <location>
        <position position="21"/>
    </location>
</feature>
<feature type="lipid moiety-binding region" description="S-diacylglycerol cysteine" evidence="2">
    <location>
        <position position="21"/>
    </location>
</feature>
<evidence type="ECO:0000250" key="1"/>
<evidence type="ECO:0000255" key="2">
    <source>
        <dbReference type="PROSITE-ProRule" id="PRU00303"/>
    </source>
</evidence>
<evidence type="ECO:0000255" key="3">
    <source>
        <dbReference type="PROSITE-ProRule" id="PRU01014"/>
    </source>
</evidence>
<evidence type="ECO:0000305" key="4"/>
<protein>
    <recommendedName>
        <fullName>Poly-beta-1,6-N-acetyl-D-glucosamine N-deacetylase</fullName>
        <shortName>PGA N-deacetylase</shortName>
        <shortName>Poly-beta-1,6-GlcNAc N-deacetylase</shortName>
        <ecNumber>3.5.1.-</ecNumber>
    </recommendedName>
</protein>
<name>PGAB_ECO57</name>
<dbReference type="EC" id="3.5.1.-"/>
<dbReference type="EMBL" id="AE005174">
    <property type="protein sequence ID" value="AAG55641.1"/>
    <property type="molecule type" value="Genomic_DNA"/>
</dbReference>
<dbReference type="EMBL" id="BA000007">
    <property type="protein sequence ID" value="BAB34692.1"/>
    <property type="molecule type" value="Genomic_DNA"/>
</dbReference>
<dbReference type="PIR" id="E85647">
    <property type="entry name" value="E85647"/>
</dbReference>
<dbReference type="PIR" id="E90787">
    <property type="entry name" value="E90787"/>
</dbReference>
<dbReference type="RefSeq" id="NP_309296.1">
    <property type="nucleotide sequence ID" value="NC_002695.1"/>
</dbReference>
<dbReference type="RefSeq" id="WP_000945580.1">
    <property type="nucleotide sequence ID" value="NZ_VOAI01000026.1"/>
</dbReference>
<dbReference type="SMR" id="Q8XAR3"/>
<dbReference type="STRING" id="155864.Z1525"/>
<dbReference type="GeneID" id="912831"/>
<dbReference type="KEGG" id="ece:Z1525"/>
<dbReference type="KEGG" id="ecs:ECs_1269"/>
<dbReference type="PATRIC" id="fig|386585.9.peg.1377"/>
<dbReference type="eggNOG" id="COG0726">
    <property type="taxonomic scope" value="Bacteria"/>
</dbReference>
<dbReference type="eggNOG" id="COG1649">
    <property type="taxonomic scope" value="Bacteria"/>
</dbReference>
<dbReference type="HOGENOM" id="CLU_030024_9_2_6"/>
<dbReference type="OMA" id="KVYAWMP"/>
<dbReference type="Proteomes" id="UP000000558">
    <property type="component" value="Chromosome"/>
</dbReference>
<dbReference type="Proteomes" id="UP000002519">
    <property type="component" value="Chromosome"/>
</dbReference>
<dbReference type="GO" id="GO:0009279">
    <property type="term" value="C:cell outer membrane"/>
    <property type="evidence" value="ECO:0007669"/>
    <property type="project" value="UniProtKB-SubCell"/>
</dbReference>
<dbReference type="GO" id="GO:0016810">
    <property type="term" value="F:hydrolase activity, acting on carbon-nitrogen (but not peptide) bonds"/>
    <property type="evidence" value="ECO:0007669"/>
    <property type="project" value="InterPro"/>
</dbReference>
<dbReference type="GO" id="GO:0005975">
    <property type="term" value="P:carbohydrate metabolic process"/>
    <property type="evidence" value="ECO:0007669"/>
    <property type="project" value="InterPro"/>
</dbReference>
<dbReference type="GO" id="GO:0043708">
    <property type="term" value="P:cell adhesion involved in biofilm formation"/>
    <property type="evidence" value="ECO:0007669"/>
    <property type="project" value="InterPro"/>
</dbReference>
<dbReference type="CDD" id="cd10964">
    <property type="entry name" value="CE4_PgaB_5s"/>
    <property type="match status" value="1"/>
</dbReference>
<dbReference type="FunFam" id="3.20.20.370:FF:000007">
    <property type="entry name" value="Poly-beta-1,6-N-acetyl-D-glucosamine N-deacetylase PgaB"/>
    <property type="match status" value="1"/>
</dbReference>
<dbReference type="FunFam" id="3.20.20.80:FF:000085">
    <property type="entry name" value="Poly-beta-1,6-N-acetyl-D-glucosamine N-deacetylase PgaB"/>
    <property type="match status" value="1"/>
</dbReference>
<dbReference type="Gene3D" id="3.20.20.80">
    <property type="entry name" value="Glycosidases"/>
    <property type="match status" value="1"/>
</dbReference>
<dbReference type="Gene3D" id="3.20.20.370">
    <property type="entry name" value="Glycoside hydrolase/deacetylase"/>
    <property type="match status" value="1"/>
</dbReference>
<dbReference type="InterPro" id="IPR011330">
    <property type="entry name" value="Glyco_hydro/deAcase_b/a-brl"/>
</dbReference>
<dbReference type="InterPro" id="IPR002509">
    <property type="entry name" value="NODB_dom"/>
</dbReference>
<dbReference type="InterPro" id="IPR023854">
    <property type="entry name" value="PGA_deacetylase_PgaB"/>
</dbReference>
<dbReference type="InterPro" id="IPR032772">
    <property type="entry name" value="PGA_deacetylase_PgaB_C"/>
</dbReference>
<dbReference type="InterPro" id="IPR051398">
    <property type="entry name" value="Polysacch_Deacetylase"/>
</dbReference>
<dbReference type="NCBIfam" id="TIGR03938">
    <property type="entry name" value="deacetyl_PgaB"/>
    <property type="match status" value="1"/>
</dbReference>
<dbReference type="NCBIfam" id="NF011177">
    <property type="entry name" value="PRK14582.1"/>
    <property type="match status" value="1"/>
</dbReference>
<dbReference type="PANTHER" id="PTHR34216">
    <property type="match status" value="1"/>
</dbReference>
<dbReference type="PANTHER" id="PTHR34216:SF7">
    <property type="entry name" value="POLY-BETA-1,6-N-ACETYL-D-GLUCOSAMINE N-DEACETYLASE"/>
    <property type="match status" value="1"/>
</dbReference>
<dbReference type="Pfam" id="PF14883">
    <property type="entry name" value="GHL13"/>
    <property type="match status" value="1"/>
</dbReference>
<dbReference type="Pfam" id="PF01522">
    <property type="entry name" value="Polysacc_deac_1"/>
    <property type="match status" value="1"/>
</dbReference>
<dbReference type="SUPFAM" id="SSF88713">
    <property type="entry name" value="Glycoside hydrolase/deacetylase"/>
    <property type="match status" value="1"/>
</dbReference>
<dbReference type="PROSITE" id="PS51677">
    <property type="entry name" value="NODB"/>
    <property type="match status" value="1"/>
</dbReference>
<dbReference type="PROSITE" id="PS51257">
    <property type="entry name" value="PROKAR_LIPOPROTEIN"/>
    <property type="match status" value="1"/>
</dbReference>